<protein>
    <recommendedName>
        <fullName evidence="1">Glutamate--tRNA ligase</fullName>
        <ecNumber evidence="1">6.1.1.17</ecNumber>
    </recommendedName>
    <alternativeName>
        <fullName evidence="1">Glutamyl-tRNA synthetase</fullName>
        <shortName evidence="1">GluRS</shortName>
    </alternativeName>
</protein>
<proteinExistence type="inferred from homology"/>
<dbReference type="EC" id="6.1.1.17" evidence="1"/>
<dbReference type="EMBL" id="AL646052">
    <property type="protein sequence ID" value="CAD14881.1"/>
    <property type="status" value="ALT_INIT"/>
    <property type="molecule type" value="Genomic_DNA"/>
</dbReference>
<dbReference type="RefSeq" id="WP_043876578.1">
    <property type="nucleotide sequence ID" value="NC_003295.1"/>
</dbReference>
<dbReference type="SMR" id="Q8Y065"/>
<dbReference type="STRING" id="267608.RSc1179"/>
<dbReference type="EnsemblBacteria" id="CAD14881">
    <property type="protein sequence ID" value="CAD14881"/>
    <property type="gene ID" value="RSc1179"/>
</dbReference>
<dbReference type="KEGG" id="rso:RSc1179"/>
<dbReference type="PATRIC" id="fig|267608.8.peg.1198"/>
<dbReference type="eggNOG" id="COG0008">
    <property type="taxonomic scope" value="Bacteria"/>
</dbReference>
<dbReference type="HOGENOM" id="CLU_015768_6_1_4"/>
<dbReference type="Proteomes" id="UP000001436">
    <property type="component" value="Chromosome"/>
</dbReference>
<dbReference type="GO" id="GO:0005829">
    <property type="term" value="C:cytosol"/>
    <property type="evidence" value="ECO:0007669"/>
    <property type="project" value="TreeGrafter"/>
</dbReference>
<dbReference type="GO" id="GO:0005524">
    <property type="term" value="F:ATP binding"/>
    <property type="evidence" value="ECO:0007669"/>
    <property type="project" value="UniProtKB-UniRule"/>
</dbReference>
<dbReference type="GO" id="GO:0004818">
    <property type="term" value="F:glutamate-tRNA ligase activity"/>
    <property type="evidence" value="ECO:0007669"/>
    <property type="project" value="UniProtKB-UniRule"/>
</dbReference>
<dbReference type="GO" id="GO:0000049">
    <property type="term" value="F:tRNA binding"/>
    <property type="evidence" value="ECO:0007669"/>
    <property type="project" value="InterPro"/>
</dbReference>
<dbReference type="GO" id="GO:0008270">
    <property type="term" value="F:zinc ion binding"/>
    <property type="evidence" value="ECO:0007669"/>
    <property type="project" value="InterPro"/>
</dbReference>
<dbReference type="GO" id="GO:0006424">
    <property type="term" value="P:glutamyl-tRNA aminoacylation"/>
    <property type="evidence" value="ECO:0007669"/>
    <property type="project" value="UniProtKB-UniRule"/>
</dbReference>
<dbReference type="CDD" id="cd00808">
    <property type="entry name" value="GluRS_core"/>
    <property type="match status" value="1"/>
</dbReference>
<dbReference type="FunFam" id="3.40.50.620:FF:000007">
    <property type="entry name" value="Glutamate--tRNA ligase"/>
    <property type="match status" value="1"/>
</dbReference>
<dbReference type="Gene3D" id="1.10.10.350">
    <property type="match status" value="1"/>
</dbReference>
<dbReference type="Gene3D" id="1.10.8.70">
    <property type="entry name" value="Glutamate-tRNA synthetase, class I, anticodon-binding domain 1"/>
    <property type="match status" value="1"/>
</dbReference>
<dbReference type="Gene3D" id="3.40.50.620">
    <property type="entry name" value="HUPs"/>
    <property type="match status" value="1"/>
</dbReference>
<dbReference type="HAMAP" id="MF_00022">
    <property type="entry name" value="Glu_tRNA_synth_type1"/>
    <property type="match status" value="1"/>
</dbReference>
<dbReference type="InterPro" id="IPR045462">
    <property type="entry name" value="aa-tRNA-synth_I_cd-bd"/>
</dbReference>
<dbReference type="InterPro" id="IPR020751">
    <property type="entry name" value="aa-tRNA-synth_I_codon-bd_sub2"/>
</dbReference>
<dbReference type="InterPro" id="IPR001412">
    <property type="entry name" value="aa-tRNA-synth_I_CS"/>
</dbReference>
<dbReference type="InterPro" id="IPR008925">
    <property type="entry name" value="aa_tRNA-synth_I_cd-bd_sf"/>
</dbReference>
<dbReference type="InterPro" id="IPR004527">
    <property type="entry name" value="Glu-tRNA-ligase_bac/mito"/>
</dbReference>
<dbReference type="InterPro" id="IPR020752">
    <property type="entry name" value="Glu-tRNA-synth_I_codon-bd_sub1"/>
</dbReference>
<dbReference type="InterPro" id="IPR000924">
    <property type="entry name" value="Glu/Gln-tRNA-synth"/>
</dbReference>
<dbReference type="InterPro" id="IPR020058">
    <property type="entry name" value="Glu/Gln-tRNA-synth_Ib_cat-dom"/>
</dbReference>
<dbReference type="InterPro" id="IPR049940">
    <property type="entry name" value="GluQ/Sye"/>
</dbReference>
<dbReference type="InterPro" id="IPR033910">
    <property type="entry name" value="GluRS_core"/>
</dbReference>
<dbReference type="InterPro" id="IPR014729">
    <property type="entry name" value="Rossmann-like_a/b/a_fold"/>
</dbReference>
<dbReference type="NCBIfam" id="TIGR00464">
    <property type="entry name" value="gltX_bact"/>
    <property type="match status" value="1"/>
</dbReference>
<dbReference type="PANTHER" id="PTHR43311">
    <property type="entry name" value="GLUTAMATE--TRNA LIGASE"/>
    <property type="match status" value="1"/>
</dbReference>
<dbReference type="PANTHER" id="PTHR43311:SF2">
    <property type="entry name" value="GLUTAMATE--TRNA LIGASE, MITOCHONDRIAL-RELATED"/>
    <property type="match status" value="1"/>
</dbReference>
<dbReference type="Pfam" id="PF19269">
    <property type="entry name" value="Anticodon_2"/>
    <property type="match status" value="1"/>
</dbReference>
<dbReference type="Pfam" id="PF00749">
    <property type="entry name" value="tRNA-synt_1c"/>
    <property type="match status" value="1"/>
</dbReference>
<dbReference type="PRINTS" id="PR00987">
    <property type="entry name" value="TRNASYNTHGLU"/>
</dbReference>
<dbReference type="SUPFAM" id="SSF48163">
    <property type="entry name" value="An anticodon-binding domain of class I aminoacyl-tRNA synthetases"/>
    <property type="match status" value="1"/>
</dbReference>
<dbReference type="SUPFAM" id="SSF52374">
    <property type="entry name" value="Nucleotidylyl transferase"/>
    <property type="match status" value="1"/>
</dbReference>
<dbReference type="PROSITE" id="PS00178">
    <property type="entry name" value="AA_TRNA_LIGASE_I"/>
    <property type="match status" value="1"/>
</dbReference>
<comment type="function">
    <text evidence="1">Catalyzes the attachment of glutamate to tRNA(Glu) in a two-step reaction: glutamate is first activated by ATP to form Glu-AMP and then transferred to the acceptor end of tRNA(Glu).</text>
</comment>
<comment type="catalytic activity">
    <reaction evidence="1">
        <text>tRNA(Glu) + L-glutamate + ATP = L-glutamyl-tRNA(Glu) + AMP + diphosphate</text>
        <dbReference type="Rhea" id="RHEA:23540"/>
        <dbReference type="Rhea" id="RHEA-COMP:9663"/>
        <dbReference type="Rhea" id="RHEA-COMP:9680"/>
        <dbReference type="ChEBI" id="CHEBI:29985"/>
        <dbReference type="ChEBI" id="CHEBI:30616"/>
        <dbReference type="ChEBI" id="CHEBI:33019"/>
        <dbReference type="ChEBI" id="CHEBI:78442"/>
        <dbReference type="ChEBI" id="CHEBI:78520"/>
        <dbReference type="ChEBI" id="CHEBI:456215"/>
        <dbReference type="EC" id="6.1.1.17"/>
    </reaction>
</comment>
<comment type="subunit">
    <text evidence="1">Monomer.</text>
</comment>
<comment type="subcellular location">
    <subcellularLocation>
        <location evidence="1">Cytoplasm</location>
    </subcellularLocation>
</comment>
<comment type="similarity">
    <text evidence="1">Belongs to the class-I aminoacyl-tRNA synthetase family. Glutamate--tRNA ligase type 1 subfamily.</text>
</comment>
<comment type="sequence caution" evidence="3">
    <conflict type="erroneous initiation">
        <sequence resource="EMBL-CDS" id="CAD14881"/>
    </conflict>
</comment>
<name>SYE_RALN1</name>
<organism>
    <name type="scientific">Ralstonia nicotianae (strain ATCC BAA-1114 / GMI1000)</name>
    <name type="common">Ralstonia solanacearum</name>
    <dbReference type="NCBI Taxonomy" id="267608"/>
    <lineage>
        <taxon>Bacteria</taxon>
        <taxon>Pseudomonadati</taxon>
        <taxon>Pseudomonadota</taxon>
        <taxon>Betaproteobacteria</taxon>
        <taxon>Burkholderiales</taxon>
        <taxon>Burkholderiaceae</taxon>
        <taxon>Ralstonia</taxon>
        <taxon>Ralstonia solanacearum species complex</taxon>
    </lineage>
</organism>
<feature type="chain" id="PRO_0000119630" description="Glutamate--tRNA ligase">
    <location>
        <begin position="1"/>
        <end position="465"/>
    </location>
</feature>
<feature type="region of interest" description="Disordered" evidence="2">
    <location>
        <begin position="120"/>
        <end position="139"/>
    </location>
</feature>
<feature type="short sequence motif" description="'HIGH' region" evidence="1">
    <location>
        <begin position="11"/>
        <end position="21"/>
    </location>
</feature>
<feature type="short sequence motif" description="'KMSKS' region" evidence="1">
    <location>
        <begin position="243"/>
        <end position="247"/>
    </location>
</feature>
<feature type="compositionally biased region" description="Basic and acidic residues" evidence="2">
    <location>
        <begin position="120"/>
        <end position="131"/>
    </location>
</feature>
<feature type="binding site" evidence="1">
    <location>
        <position position="246"/>
    </location>
    <ligand>
        <name>ATP</name>
        <dbReference type="ChEBI" id="CHEBI:30616"/>
    </ligand>
</feature>
<gene>
    <name evidence="1" type="primary">gltX</name>
    <name type="ordered locus">RSc1179</name>
    <name type="ORF">RS04541</name>
</gene>
<sequence length="465" mass="52199">MTQRVRTRFAPSPTGFIHLGNIRSALYPWAFARKMKGDFILRIEDTDVERSTQEAVDVILEAMDWLGLDIDEGPFYQMQRMDRYREVIAQMVAQDLAYPCYMSTEELDALREAQRVRGEKPRYDGTWRPEPGKVLPTPPAGVQPVIRFKNPIGGSVVWDDAVKGRIEISNDELDDLVIARPDGTPTYNFCVVVDDMDMRITHVIRGDDHVNNTPRQINILRALGGTPPIYAHLPTVLNEQGEKMSKRHGAMSVTGYRDAGYLPEAVVNYLARLGWAHGDAEIFSREQFVEWFDLEHLGKSPAQYNPEKLAWLNNHYIKQADNARLAELVKPFIEALGGRVEGGPQLADVMALVKDRANTLQEVAQTALLFYRTEISVAPELAAQHLTDEVRPGIMALADKLGTLPEWKREAIGAAFKEVLGAHGWKMPKLAMPVRLLVAGQLQTPSIDAVLELFGREVVLRRLAG</sequence>
<keyword id="KW-0030">Aminoacyl-tRNA synthetase</keyword>
<keyword id="KW-0067">ATP-binding</keyword>
<keyword id="KW-0963">Cytoplasm</keyword>
<keyword id="KW-0436">Ligase</keyword>
<keyword id="KW-0547">Nucleotide-binding</keyword>
<keyword id="KW-0648">Protein biosynthesis</keyword>
<keyword id="KW-1185">Reference proteome</keyword>
<evidence type="ECO:0000255" key="1">
    <source>
        <dbReference type="HAMAP-Rule" id="MF_00022"/>
    </source>
</evidence>
<evidence type="ECO:0000256" key="2">
    <source>
        <dbReference type="SAM" id="MobiDB-lite"/>
    </source>
</evidence>
<evidence type="ECO:0000305" key="3"/>
<reference key="1">
    <citation type="journal article" date="2002" name="Nature">
        <title>Genome sequence of the plant pathogen Ralstonia solanacearum.</title>
        <authorList>
            <person name="Salanoubat M."/>
            <person name="Genin S."/>
            <person name="Artiguenave F."/>
            <person name="Gouzy J."/>
            <person name="Mangenot S."/>
            <person name="Arlat M."/>
            <person name="Billault A."/>
            <person name="Brottier P."/>
            <person name="Camus J.-C."/>
            <person name="Cattolico L."/>
            <person name="Chandler M."/>
            <person name="Choisne N."/>
            <person name="Claudel-Renard C."/>
            <person name="Cunnac S."/>
            <person name="Demange N."/>
            <person name="Gaspin C."/>
            <person name="Lavie M."/>
            <person name="Moisan A."/>
            <person name="Robert C."/>
            <person name="Saurin W."/>
            <person name="Schiex T."/>
            <person name="Siguier P."/>
            <person name="Thebault P."/>
            <person name="Whalen M."/>
            <person name="Wincker P."/>
            <person name="Levy M."/>
            <person name="Weissenbach J."/>
            <person name="Boucher C.A."/>
        </authorList>
    </citation>
    <scope>NUCLEOTIDE SEQUENCE [LARGE SCALE GENOMIC DNA]</scope>
    <source>
        <strain>ATCC BAA-1114 / GMI1000</strain>
    </source>
</reference>
<accession>Q8Y065</accession>